<organism>
    <name type="scientific">Drosophila melanogaster</name>
    <name type="common">Fruit fly</name>
    <dbReference type="NCBI Taxonomy" id="7227"/>
    <lineage>
        <taxon>Eukaryota</taxon>
        <taxon>Metazoa</taxon>
        <taxon>Ecdysozoa</taxon>
        <taxon>Arthropoda</taxon>
        <taxon>Hexapoda</taxon>
        <taxon>Insecta</taxon>
        <taxon>Pterygota</taxon>
        <taxon>Neoptera</taxon>
        <taxon>Endopterygota</taxon>
        <taxon>Diptera</taxon>
        <taxon>Brachycera</taxon>
        <taxon>Muscomorpha</taxon>
        <taxon>Ephydroidea</taxon>
        <taxon>Drosophilidae</taxon>
        <taxon>Drosophila</taxon>
        <taxon>Sophophora</taxon>
    </lineage>
</organism>
<sequence length="667" mass="76807">MGLRFQQLKKLWLLYLFLLFFAFFMFAISINLYVASIQGGDAEMRHPKPPPKRRSLWPHKNIVAHYIGKGDIFGNMTADDYNINLFQPINGEGADGRPVVVPPRDRFRMQRFFRLNSFNLLASDRIPLNRTLKDYRTPECRDKKYASGLPSTSVIIVFHNEAWSVLLRTITSVINRSPRHLLKEIILVDDASDRSYLKRQLESYVKVLAVPTRIFRMKKRSGLVPARLLGAENARGDVLTFLDAHCECSRGWLEPLLSRIKESRKVVICPVIDIISDDNFSYTKTFENHWGAFNWQLSFRWFSSDRKRQTAGNSSKDSTDPIATPGMAGGLFAIDRKYFYEMGSYDSNMRVWGGENVEMSFRIWQCGGRVEISPCSHVGHVFRSSTPYTFPGGMSEVLTDNLARAATVWMDDWQYFIMLYTSGLTLGAKDKVNVTERVALRERLQCKPFSWYLENIWPEHFFPAPDRFFGKIIWLDGETECAQAYSKHMKNLPGRALSREWKRAFEEIDSKAEELMALIDLERDKCLRPLKEDVPRSSLSAVTVGDCTSHAQSMDMFVITPKGQIMTNDNVCLTYRQQKLGVIKMLKNRNATTSNVMLAQCASDSSQLWTYDMDTQQISHRDTKLCLTLKAATNSRLQKVEKVVLSMECDFKDITQKWGFIPLPWRM</sequence>
<dbReference type="EC" id="2.4.1.41" evidence="4"/>
<dbReference type="EMBL" id="AE013599">
    <property type="protein sequence ID" value="AAF59298.1"/>
    <property type="molecule type" value="Genomic_DNA"/>
</dbReference>
<dbReference type="EMBL" id="AF145655">
    <property type="protein sequence ID" value="AAD38630.1"/>
    <property type="molecule type" value="mRNA"/>
</dbReference>
<dbReference type="RefSeq" id="NP_610256.1">
    <property type="nucleotide sequence ID" value="NM_136412.4"/>
</dbReference>
<dbReference type="SMR" id="Q9Y117"/>
<dbReference type="BioGRID" id="61516">
    <property type="interactions" value="8"/>
</dbReference>
<dbReference type="FunCoup" id="Q9Y117">
    <property type="interactions" value="152"/>
</dbReference>
<dbReference type="IntAct" id="Q9Y117">
    <property type="interactions" value="2"/>
</dbReference>
<dbReference type="STRING" id="7227.FBpp0088130"/>
<dbReference type="CAZy" id="CBM13">
    <property type="family name" value="Carbohydrate-Binding Module Family 13"/>
</dbReference>
<dbReference type="CAZy" id="GT27">
    <property type="family name" value="Glycosyltransferase Family 27"/>
</dbReference>
<dbReference type="GlyCosmos" id="Q9Y117">
    <property type="glycosylation" value="6 sites, No reported glycans"/>
</dbReference>
<dbReference type="GlyGen" id="Q9Y117">
    <property type="glycosylation" value="6 sites"/>
</dbReference>
<dbReference type="PaxDb" id="7227-FBpp0088130"/>
<dbReference type="DNASU" id="35627"/>
<dbReference type="EnsemblMetazoa" id="FBtr0089061">
    <property type="protein sequence ID" value="FBpp0088130"/>
    <property type="gene ID" value="FBgn0027558"/>
</dbReference>
<dbReference type="GeneID" id="35627"/>
<dbReference type="KEGG" id="dme:Dmel_CG4445"/>
<dbReference type="AGR" id="FB:FBgn0027558"/>
<dbReference type="CTD" id="35627"/>
<dbReference type="FlyBase" id="FBgn0027558">
    <property type="gene designation" value="Pgant3"/>
</dbReference>
<dbReference type="VEuPathDB" id="VectorBase:FBgn0027558"/>
<dbReference type="eggNOG" id="KOG3736">
    <property type="taxonomic scope" value="Eukaryota"/>
</dbReference>
<dbReference type="HOGENOM" id="CLU_013477_0_1_1"/>
<dbReference type="InParanoid" id="Q9Y117"/>
<dbReference type="OMA" id="LWTYDMD"/>
<dbReference type="OrthoDB" id="330637at2759"/>
<dbReference type="PhylomeDB" id="Q9Y117"/>
<dbReference type="BRENDA" id="2.4.1.41">
    <property type="organism ID" value="1994"/>
</dbReference>
<dbReference type="Reactome" id="R-DME-6811436">
    <property type="pathway name" value="COPI-independent Golgi-to-ER retrograde traffic"/>
</dbReference>
<dbReference type="Reactome" id="R-DME-913709">
    <property type="pathway name" value="O-linked glycosylation of mucins"/>
</dbReference>
<dbReference type="UniPathway" id="UPA00378"/>
<dbReference type="BioGRID-ORCS" id="35627">
    <property type="hits" value="0 hits in 1 CRISPR screen"/>
</dbReference>
<dbReference type="ChiTaRS" id="pgant3">
    <property type="organism name" value="fly"/>
</dbReference>
<dbReference type="GenomeRNAi" id="35627"/>
<dbReference type="PRO" id="PR:Q9Y117"/>
<dbReference type="Proteomes" id="UP000000803">
    <property type="component" value="Chromosome 2R"/>
</dbReference>
<dbReference type="Bgee" id="FBgn0027558">
    <property type="expression patterns" value="Expressed in adult differentiating enterocyte in digestive tract and 73 other cell types or tissues"/>
</dbReference>
<dbReference type="GO" id="GO:0005794">
    <property type="term" value="C:Golgi apparatus"/>
    <property type="evidence" value="ECO:0000314"/>
    <property type="project" value="FlyBase"/>
</dbReference>
<dbReference type="GO" id="GO:0000139">
    <property type="term" value="C:Golgi membrane"/>
    <property type="evidence" value="ECO:0000304"/>
    <property type="project" value="FlyBase"/>
</dbReference>
<dbReference type="GO" id="GO:0005795">
    <property type="term" value="C:Golgi stack"/>
    <property type="evidence" value="ECO:0000303"/>
    <property type="project" value="UniProtKB"/>
</dbReference>
<dbReference type="GO" id="GO:0030246">
    <property type="term" value="F:carbohydrate binding"/>
    <property type="evidence" value="ECO:0007669"/>
    <property type="project" value="UniProtKB-KW"/>
</dbReference>
<dbReference type="GO" id="GO:0046872">
    <property type="term" value="F:metal ion binding"/>
    <property type="evidence" value="ECO:0007669"/>
    <property type="project" value="UniProtKB-KW"/>
</dbReference>
<dbReference type="GO" id="GO:0004653">
    <property type="term" value="F:polypeptide N-acetylgalactosaminyltransferase activity"/>
    <property type="evidence" value="ECO:0000314"/>
    <property type="project" value="UniProtKB"/>
</dbReference>
<dbReference type="GO" id="GO:0031589">
    <property type="term" value="P:cell-substrate adhesion"/>
    <property type="evidence" value="ECO:0000315"/>
    <property type="project" value="FlyBase"/>
</dbReference>
<dbReference type="GO" id="GO:0070278">
    <property type="term" value="P:extracellular matrix constituent secretion"/>
    <property type="evidence" value="ECO:0000315"/>
    <property type="project" value="FlyBase"/>
</dbReference>
<dbReference type="GO" id="GO:0016266">
    <property type="term" value="P:O-glycan processing"/>
    <property type="evidence" value="ECO:0000314"/>
    <property type="project" value="FlyBase"/>
</dbReference>
<dbReference type="GO" id="GO:0006493">
    <property type="term" value="P:protein O-linked glycosylation"/>
    <property type="evidence" value="ECO:0000314"/>
    <property type="project" value="UniProtKB"/>
</dbReference>
<dbReference type="GO" id="GO:0033628">
    <property type="term" value="P:regulation of cell adhesion mediated by integrin"/>
    <property type="evidence" value="ECO:0000315"/>
    <property type="project" value="FlyBase"/>
</dbReference>
<dbReference type="CDD" id="cd23460">
    <property type="entry name" value="beta-trefoil_Ricin_Pgant3-like"/>
    <property type="match status" value="1"/>
</dbReference>
<dbReference type="CDD" id="cd02510">
    <property type="entry name" value="pp-GalNAc-T"/>
    <property type="match status" value="1"/>
</dbReference>
<dbReference type="FunFam" id="2.80.10.50:FF:000101">
    <property type="entry name" value="Polypeptide N-acetylgalactosaminyltransferase"/>
    <property type="match status" value="1"/>
</dbReference>
<dbReference type="FunFam" id="3.90.550.10:FF:000021">
    <property type="entry name" value="Polypeptide N-acetylgalactosaminyltransferase"/>
    <property type="match status" value="1"/>
</dbReference>
<dbReference type="Gene3D" id="2.80.10.50">
    <property type="match status" value="1"/>
</dbReference>
<dbReference type="Gene3D" id="3.90.550.10">
    <property type="entry name" value="Spore Coat Polysaccharide Biosynthesis Protein SpsA, Chain A"/>
    <property type="match status" value="1"/>
</dbReference>
<dbReference type="InterPro" id="IPR045885">
    <property type="entry name" value="GalNAc-T"/>
</dbReference>
<dbReference type="InterPro" id="IPR001173">
    <property type="entry name" value="Glyco_trans_2-like"/>
</dbReference>
<dbReference type="InterPro" id="IPR029044">
    <property type="entry name" value="Nucleotide-diphossugar_trans"/>
</dbReference>
<dbReference type="InterPro" id="IPR035992">
    <property type="entry name" value="Ricin_B-like_lectins"/>
</dbReference>
<dbReference type="InterPro" id="IPR000772">
    <property type="entry name" value="Ricin_B_lectin"/>
</dbReference>
<dbReference type="PANTHER" id="PTHR11675">
    <property type="entry name" value="N-ACETYLGALACTOSAMINYLTRANSFERASE"/>
    <property type="match status" value="1"/>
</dbReference>
<dbReference type="PANTHER" id="PTHR11675:SF118">
    <property type="entry name" value="POLYPEPTIDE N-ACETYLGALACTOSAMINYLTRANSFERASE 3"/>
    <property type="match status" value="1"/>
</dbReference>
<dbReference type="Pfam" id="PF00535">
    <property type="entry name" value="Glycos_transf_2"/>
    <property type="match status" value="1"/>
</dbReference>
<dbReference type="Pfam" id="PF00652">
    <property type="entry name" value="Ricin_B_lectin"/>
    <property type="match status" value="1"/>
</dbReference>
<dbReference type="SMART" id="SM00458">
    <property type="entry name" value="RICIN"/>
    <property type="match status" value="1"/>
</dbReference>
<dbReference type="SUPFAM" id="SSF53448">
    <property type="entry name" value="Nucleotide-diphospho-sugar transferases"/>
    <property type="match status" value="1"/>
</dbReference>
<dbReference type="SUPFAM" id="SSF50370">
    <property type="entry name" value="Ricin B-like lectins"/>
    <property type="match status" value="1"/>
</dbReference>
<dbReference type="PROSITE" id="PS50231">
    <property type="entry name" value="RICIN_B_LECTIN"/>
    <property type="match status" value="1"/>
</dbReference>
<gene>
    <name evidence="13" type="primary">Pgant3</name>
    <name evidence="13" type="ORF">CG4445</name>
</gene>
<keyword id="KW-1015">Disulfide bond</keyword>
<keyword id="KW-0325">Glycoprotein</keyword>
<keyword id="KW-0328">Glycosyltransferase</keyword>
<keyword id="KW-0333">Golgi apparatus</keyword>
<keyword id="KW-0430">Lectin</keyword>
<keyword id="KW-0464">Manganese</keyword>
<keyword id="KW-0472">Membrane</keyword>
<keyword id="KW-0479">Metal-binding</keyword>
<keyword id="KW-1185">Reference proteome</keyword>
<keyword id="KW-0735">Signal-anchor</keyword>
<keyword id="KW-0808">Transferase</keyword>
<keyword id="KW-0812">Transmembrane</keyword>
<keyword id="KW-1133">Transmembrane helix</keyword>
<comment type="function">
    <text evidence="4 6 7 8 9 10">Catalyzes the initial reaction in O-linked oligosaccharide biosynthesis, the transfer of an N-acetyl-D-galactosamine residue to a serine or threonine residue on the protein receptor (PubMed:12829714). It can both act as a peptide transferase that transfers GalNAc onto unmodified peptide substrates, and as a glycopeptide transferase that requires the prior addition of a GalNAc on a peptide before adding additional GalNAc moieties. Prefers EA2 as substrate. Has weak activity toward Muc5AC-3, -13 and -3/13 substrates (PubMed:12829714). Plays a critical role in the regulation of integrin-mediated cell adhesion during wing development by influencing, via glycosylation, the secretion and localization of the integrin ligand Tig to the basal cell layer interface (PubMed:18835818, PubMed:20371600, PubMed:20807760, PubMed:22157008). Might have a role in protein O-glycosylation in the Golgi and thereby in establishing and/or maintaining a proper secretory apparatus structure (PubMed:20807760). Together with Pgant35A, regulates integrin levels and activity-dependent integrin signaling at the synapse in neurons and muscles (PubMed:25253852).</text>
</comment>
<comment type="catalytic activity">
    <reaction evidence="4">
        <text>L-seryl-[protein] + UDP-N-acetyl-alpha-D-galactosamine = a 3-O-[N-acetyl-alpha-D-galactosaminyl]-L-seryl-[protein] + UDP + H(+)</text>
        <dbReference type="Rhea" id="RHEA:23956"/>
        <dbReference type="Rhea" id="RHEA-COMP:9863"/>
        <dbReference type="Rhea" id="RHEA-COMP:12788"/>
        <dbReference type="ChEBI" id="CHEBI:15378"/>
        <dbReference type="ChEBI" id="CHEBI:29999"/>
        <dbReference type="ChEBI" id="CHEBI:53604"/>
        <dbReference type="ChEBI" id="CHEBI:58223"/>
        <dbReference type="ChEBI" id="CHEBI:67138"/>
        <dbReference type="EC" id="2.4.1.41"/>
    </reaction>
</comment>
<comment type="catalytic activity">
    <reaction evidence="4">
        <text>L-threonyl-[protein] + UDP-N-acetyl-alpha-D-galactosamine = a 3-O-[N-acetyl-alpha-D-galactosaminyl]-L-threonyl-[protein] + UDP + H(+)</text>
        <dbReference type="Rhea" id="RHEA:52424"/>
        <dbReference type="Rhea" id="RHEA-COMP:11060"/>
        <dbReference type="Rhea" id="RHEA-COMP:11689"/>
        <dbReference type="ChEBI" id="CHEBI:15378"/>
        <dbReference type="ChEBI" id="CHEBI:30013"/>
        <dbReference type="ChEBI" id="CHEBI:58223"/>
        <dbReference type="ChEBI" id="CHEBI:67138"/>
        <dbReference type="ChEBI" id="CHEBI:87075"/>
        <dbReference type="EC" id="2.4.1.41"/>
    </reaction>
</comment>
<comment type="cofactor">
    <cofactor evidence="1">
        <name>Mn(2+)</name>
        <dbReference type="ChEBI" id="CHEBI:29035"/>
    </cofactor>
</comment>
<comment type="pathway">
    <text evidence="12">Protein modification; protein glycosylation.</text>
</comment>
<comment type="subcellular location">
    <subcellularLocation>
        <location evidence="7">Golgi apparatus membrane</location>
        <topology evidence="7">Single-pass type II membrane protein</topology>
    </subcellularLocation>
</comment>
<comment type="tissue specificity">
    <text evidence="4 5">Expressed in developing oocytes and egg chambers. During embryonic stages 9-11, expressed in the primordiums of the foregut, midgut and hindgut. During embryonic stages 12-13, expression is found uniquely in the posterior spiracle. During embryonic stages 14-17, expressed in the pharynx, esophagus and posterior spiracles. Expression observed in the epidermis during embryonic stages 16-17. In third instar larvae, expressed ubiquitously in wing, with increased expression in pleura and notum, eye-antennal, leg and haltere imaginal disks.</text>
</comment>
<comment type="developmental stage">
    <text evidence="4 5">Expressed both maternally and zygotically. Expressed throughout embryonic, larval, pupal and adult stages.</text>
</comment>
<comment type="domain">
    <text evidence="1">There are two conserved domains in the glycosyltransferase region: the N-terminal domain (domain A, also called GT1 motif), which is probably involved in manganese coordination and substrate binding and the C-terminal domain (domain B, also called Gal/GalNAc-T motif), which is probably involved in catalytic reaction and UDP-Gal binding.</text>
</comment>
<comment type="domain">
    <text evidence="1">The ricin B-type lectin domain binds to GalNAc and contributes to the glycopeptide specificity.</text>
</comment>
<comment type="disruption phenotype">
    <text evidence="6 7 9 10">Mutant larval wing disks show a decrease in thickness and in the content of O-glycoproteins specifically along the basal surface of the columnar epithelial cells (PubMed:18835818, PubMed:20371600). Adult mutants display blistered wings (PubMed:18835818, PubMed:20371600). Mutant larval shows down-regulation of synaptic O-linked glycosylation, integrin level and signaling via Ten-m and if. Synapses show smaller synaptic boutons, expanded activity-dependent postsynaptic pockets which affect synaptic plasticity and synaptic strength in both the pre-synaptic and post-synaptic assembly, no differences in neuromuscular junction morphology (PubMed:25253852). Simultaneous knockout of Pgant35A, restores normal synaptic strength (PubMed:25253852). RNAi-mediated knockdown in the developing wing results in a blistered phenotype (PubMed:22157008).</text>
</comment>
<comment type="similarity">
    <text evidence="11">Belongs to the glycosyltransferase 2 family. GalNAc-T subfamily.</text>
</comment>
<evidence type="ECO:0000250" key="1"/>
<evidence type="ECO:0000255" key="2"/>
<evidence type="ECO:0000255" key="3">
    <source>
        <dbReference type="PROSITE-ProRule" id="PRU00174"/>
    </source>
</evidence>
<evidence type="ECO:0000269" key="4">
    <source>
    </source>
</evidence>
<evidence type="ECO:0000269" key="5">
    <source>
    </source>
</evidence>
<evidence type="ECO:0000269" key="6">
    <source>
    </source>
</evidence>
<evidence type="ECO:0000269" key="7">
    <source>
    </source>
</evidence>
<evidence type="ECO:0000269" key="8">
    <source>
    </source>
</evidence>
<evidence type="ECO:0000269" key="9">
    <source>
    </source>
</evidence>
<evidence type="ECO:0000269" key="10">
    <source>
    </source>
</evidence>
<evidence type="ECO:0000305" key="11"/>
<evidence type="ECO:0000305" key="12">
    <source>
    </source>
</evidence>
<evidence type="ECO:0000312" key="13">
    <source>
        <dbReference type="FlyBase" id="FBgn0027558"/>
    </source>
</evidence>
<accession>Q9Y117</accession>
<name>GALT3_DROME</name>
<proteinExistence type="evidence at protein level"/>
<reference key="1">
    <citation type="journal article" date="2000" name="Science">
        <title>The genome sequence of Drosophila melanogaster.</title>
        <authorList>
            <person name="Adams M.D."/>
            <person name="Celniker S.E."/>
            <person name="Holt R.A."/>
            <person name="Evans C.A."/>
            <person name="Gocayne J.D."/>
            <person name="Amanatides P.G."/>
            <person name="Scherer S.E."/>
            <person name="Li P.W."/>
            <person name="Hoskins R.A."/>
            <person name="Galle R.F."/>
            <person name="George R.A."/>
            <person name="Lewis S.E."/>
            <person name="Richards S."/>
            <person name="Ashburner M."/>
            <person name="Henderson S.N."/>
            <person name="Sutton G.G."/>
            <person name="Wortman J.R."/>
            <person name="Yandell M.D."/>
            <person name="Zhang Q."/>
            <person name="Chen L.X."/>
            <person name="Brandon R.C."/>
            <person name="Rogers Y.-H.C."/>
            <person name="Blazej R.G."/>
            <person name="Champe M."/>
            <person name="Pfeiffer B.D."/>
            <person name="Wan K.H."/>
            <person name="Doyle C."/>
            <person name="Baxter E.G."/>
            <person name="Helt G."/>
            <person name="Nelson C.R."/>
            <person name="Miklos G.L.G."/>
            <person name="Abril J.F."/>
            <person name="Agbayani A."/>
            <person name="An H.-J."/>
            <person name="Andrews-Pfannkoch C."/>
            <person name="Baldwin D."/>
            <person name="Ballew R.M."/>
            <person name="Basu A."/>
            <person name="Baxendale J."/>
            <person name="Bayraktaroglu L."/>
            <person name="Beasley E.M."/>
            <person name="Beeson K.Y."/>
            <person name="Benos P.V."/>
            <person name="Berman B.P."/>
            <person name="Bhandari D."/>
            <person name="Bolshakov S."/>
            <person name="Borkova D."/>
            <person name="Botchan M.R."/>
            <person name="Bouck J."/>
            <person name="Brokstein P."/>
            <person name="Brottier P."/>
            <person name="Burtis K.C."/>
            <person name="Busam D.A."/>
            <person name="Butler H."/>
            <person name="Cadieu E."/>
            <person name="Center A."/>
            <person name="Chandra I."/>
            <person name="Cherry J.M."/>
            <person name="Cawley S."/>
            <person name="Dahlke C."/>
            <person name="Davenport L.B."/>
            <person name="Davies P."/>
            <person name="de Pablos B."/>
            <person name="Delcher A."/>
            <person name="Deng Z."/>
            <person name="Mays A.D."/>
            <person name="Dew I."/>
            <person name="Dietz S.M."/>
            <person name="Dodson K."/>
            <person name="Doup L.E."/>
            <person name="Downes M."/>
            <person name="Dugan-Rocha S."/>
            <person name="Dunkov B.C."/>
            <person name="Dunn P."/>
            <person name="Durbin K.J."/>
            <person name="Evangelista C.C."/>
            <person name="Ferraz C."/>
            <person name="Ferriera S."/>
            <person name="Fleischmann W."/>
            <person name="Fosler C."/>
            <person name="Gabrielian A.E."/>
            <person name="Garg N.S."/>
            <person name="Gelbart W.M."/>
            <person name="Glasser K."/>
            <person name="Glodek A."/>
            <person name="Gong F."/>
            <person name="Gorrell J.H."/>
            <person name="Gu Z."/>
            <person name="Guan P."/>
            <person name="Harris M."/>
            <person name="Harris N.L."/>
            <person name="Harvey D.A."/>
            <person name="Heiman T.J."/>
            <person name="Hernandez J.R."/>
            <person name="Houck J."/>
            <person name="Hostin D."/>
            <person name="Houston K.A."/>
            <person name="Howland T.J."/>
            <person name="Wei M.-H."/>
            <person name="Ibegwam C."/>
            <person name="Jalali M."/>
            <person name="Kalush F."/>
            <person name="Karpen G.H."/>
            <person name="Ke Z."/>
            <person name="Kennison J.A."/>
            <person name="Ketchum K.A."/>
            <person name="Kimmel B.E."/>
            <person name="Kodira C.D."/>
            <person name="Kraft C.L."/>
            <person name="Kravitz S."/>
            <person name="Kulp D."/>
            <person name="Lai Z."/>
            <person name="Lasko P."/>
            <person name="Lei Y."/>
            <person name="Levitsky A.A."/>
            <person name="Li J.H."/>
            <person name="Li Z."/>
            <person name="Liang Y."/>
            <person name="Lin X."/>
            <person name="Liu X."/>
            <person name="Mattei B."/>
            <person name="McIntosh T.C."/>
            <person name="McLeod M.P."/>
            <person name="McPherson D."/>
            <person name="Merkulov G."/>
            <person name="Milshina N.V."/>
            <person name="Mobarry C."/>
            <person name="Morris J."/>
            <person name="Moshrefi A."/>
            <person name="Mount S.M."/>
            <person name="Moy M."/>
            <person name="Murphy B."/>
            <person name="Murphy L."/>
            <person name="Muzny D.M."/>
            <person name="Nelson D.L."/>
            <person name="Nelson D.R."/>
            <person name="Nelson K.A."/>
            <person name="Nixon K."/>
            <person name="Nusskern D.R."/>
            <person name="Pacleb J.M."/>
            <person name="Palazzolo M."/>
            <person name="Pittman G.S."/>
            <person name="Pan S."/>
            <person name="Pollard J."/>
            <person name="Puri V."/>
            <person name="Reese M.G."/>
            <person name="Reinert K."/>
            <person name="Remington K."/>
            <person name="Saunders R.D.C."/>
            <person name="Scheeler F."/>
            <person name="Shen H."/>
            <person name="Shue B.C."/>
            <person name="Siden-Kiamos I."/>
            <person name="Simpson M."/>
            <person name="Skupski M.P."/>
            <person name="Smith T.J."/>
            <person name="Spier E."/>
            <person name="Spradling A.C."/>
            <person name="Stapleton M."/>
            <person name="Strong R."/>
            <person name="Sun E."/>
            <person name="Svirskas R."/>
            <person name="Tector C."/>
            <person name="Turner R."/>
            <person name="Venter E."/>
            <person name="Wang A.H."/>
            <person name="Wang X."/>
            <person name="Wang Z.-Y."/>
            <person name="Wassarman D.A."/>
            <person name="Weinstock G.M."/>
            <person name="Weissenbach J."/>
            <person name="Williams S.M."/>
            <person name="Woodage T."/>
            <person name="Worley K.C."/>
            <person name="Wu D."/>
            <person name="Yang S."/>
            <person name="Yao Q.A."/>
            <person name="Ye J."/>
            <person name="Yeh R.-F."/>
            <person name="Zaveri J.S."/>
            <person name="Zhan M."/>
            <person name="Zhang G."/>
            <person name="Zhao Q."/>
            <person name="Zheng L."/>
            <person name="Zheng X.H."/>
            <person name="Zhong F.N."/>
            <person name="Zhong W."/>
            <person name="Zhou X."/>
            <person name="Zhu S.C."/>
            <person name="Zhu X."/>
            <person name="Smith H.O."/>
            <person name="Gibbs R.A."/>
            <person name="Myers E.W."/>
            <person name="Rubin G.M."/>
            <person name="Venter J.C."/>
        </authorList>
    </citation>
    <scope>NUCLEOTIDE SEQUENCE [LARGE SCALE GENOMIC DNA]</scope>
    <source>
        <strain>Berkeley</strain>
    </source>
</reference>
<reference key="2">
    <citation type="journal article" date="2002" name="Genome Biol.">
        <title>Annotation of the Drosophila melanogaster euchromatic genome: a systematic review.</title>
        <authorList>
            <person name="Misra S."/>
            <person name="Crosby M.A."/>
            <person name="Mungall C.J."/>
            <person name="Matthews B.B."/>
            <person name="Campbell K.S."/>
            <person name="Hradecky P."/>
            <person name="Huang Y."/>
            <person name="Kaminker J.S."/>
            <person name="Millburn G.H."/>
            <person name="Prochnik S.E."/>
            <person name="Smith C.D."/>
            <person name="Tupy J.L."/>
            <person name="Whitfield E.J."/>
            <person name="Bayraktaroglu L."/>
            <person name="Berman B.P."/>
            <person name="Bettencourt B.R."/>
            <person name="Celniker S.E."/>
            <person name="de Grey A.D.N.J."/>
            <person name="Drysdale R.A."/>
            <person name="Harris N.L."/>
            <person name="Richter J."/>
            <person name="Russo S."/>
            <person name="Schroeder A.J."/>
            <person name="Shu S.Q."/>
            <person name="Stapleton M."/>
            <person name="Yamada C."/>
            <person name="Ashburner M."/>
            <person name="Gelbart W.M."/>
            <person name="Rubin G.M."/>
            <person name="Lewis S.E."/>
        </authorList>
    </citation>
    <scope>GENOME REANNOTATION</scope>
    <source>
        <strain>Berkeley</strain>
    </source>
</reference>
<reference key="3">
    <citation type="journal article" date="2002" name="Genome Biol.">
        <title>A Drosophila full-length cDNA resource.</title>
        <authorList>
            <person name="Stapleton M."/>
            <person name="Carlson J.W."/>
            <person name="Brokstein P."/>
            <person name="Yu C."/>
            <person name="Champe M."/>
            <person name="George R.A."/>
            <person name="Guarin H."/>
            <person name="Kronmiller B."/>
            <person name="Pacleb J.M."/>
            <person name="Park S."/>
            <person name="Wan K.H."/>
            <person name="Rubin G.M."/>
            <person name="Celniker S.E."/>
        </authorList>
    </citation>
    <scope>NUCLEOTIDE SEQUENCE [LARGE SCALE MRNA]</scope>
    <source>
        <strain>Berkeley</strain>
        <tissue>Head</tissue>
    </source>
</reference>
<reference key="4">
    <citation type="journal article" date="2003" name="J. Biol. Chem.">
        <title>Functional characterization and expression analysis of members of the UDP-GalNAc:polypeptide N-acetylgalactosaminyltransferase family from Drosophila melanogaster.</title>
        <authorList>
            <person name="Ten Hagen K.G."/>
            <person name="Tran D.T."/>
            <person name="Gerken T.A."/>
            <person name="Stein D.S."/>
            <person name="Zhang Z."/>
        </authorList>
    </citation>
    <scope>FUNCTION</scope>
    <scope>CATALYTIC ACTIVITY</scope>
    <scope>TISSUE SPECIFICITY</scope>
    <scope>DEVELOPMENTAL STAGE</scope>
</reference>
<reference key="5">
    <citation type="journal article" date="2006" name="Glycobiology">
        <title>Expression of the UDP-GalNAc: polypeptide N-acetylgalactosaminyltransferase family is spatially and temporally regulated during Drosophila development.</title>
        <authorList>
            <person name="Tian E."/>
            <person name="Ten Hagen K.G."/>
        </authorList>
    </citation>
    <scope>TISSUE SPECIFICITY</scope>
    <scope>DEVELOPMENTAL STAGE</scope>
</reference>
<reference key="6">
    <citation type="journal article" date="2008" name="J. Biol. Chem.">
        <title>A mucin-type O-glycosyltransferase modulates cell adhesion during Drosophila development.</title>
        <authorList>
            <person name="Zhang L."/>
            <person name="Zhang Y."/>
            <person name="Hagen K.G."/>
        </authorList>
    </citation>
    <scope>FUNCTION</scope>
    <scope>DISRUPTION PHENOTYPE</scope>
</reference>
<reference key="7">
    <citation type="journal article" date="2010" name="J. Biol. Chem.">
        <title>An O-glycosyltransferase promotes cell adhesion during development by influencing secretion of an extracellular matrix integrin ligand.</title>
        <authorList>
            <person name="Zhang L."/>
            <person name="Tran D.T."/>
            <person name="Ten Hagen K.G."/>
        </authorList>
    </citation>
    <scope>FUNCTION</scope>
    <scope>SUBCELLULAR LOCATION</scope>
    <scope>DISRUPTION PHENOTYPE</scope>
    <scope>MUTAGENESIS OF ARG-130</scope>
</reference>
<reference key="8">
    <citation type="journal article" date="2010" name="J. Biol. Chem.">
        <title>Dissecting the biological role of mucin-type O-glycosylation using RNA interference in Drosophila cell culture.</title>
        <authorList>
            <person name="Zhang L."/>
            <person name="Ten Hagen K.G."/>
        </authorList>
    </citation>
    <scope>FUNCTION</scope>
</reference>
<reference key="9">
    <citation type="journal article" date="2012" name="J. Biol. Chem.">
        <title>Multiple members of the UDP-GalNAc: polypeptide N-acetylgalactosaminyltransferase family are essential for viability in Drosophila.</title>
        <authorList>
            <person name="Tran D.T."/>
            <person name="Zhang L."/>
            <person name="Zhang Y."/>
            <person name="Tian E."/>
            <person name="Earl L.A."/>
            <person name="Ten Hagen K.G."/>
        </authorList>
    </citation>
    <scope>FUNCTION</scope>
    <scope>DISRUPTION PHENOTYPE</scope>
</reference>
<reference key="10">
    <citation type="journal article" date="2014" name="J. Neurosci.">
        <title>Two protein N-acetylgalactosaminyl transferases regulate synaptic plasticity by activity-dependent regulation of integrin signaling.</title>
        <authorList>
            <person name="Dani N."/>
            <person name="Zhu H."/>
            <person name="Broadie K."/>
        </authorList>
    </citation>
    <scope>FUNCTION</scope>
    <scope>DISRUPTION PHENOTYPE</scope>
</reference>
<protein>
    <recommendedName>
        <fullName>Polypeptide N-acetylgalactosaminyltransferase 3</fullName>
        <shortName>pp-GaNTase 3</shortName>
        <ecNumber evidence="4">2.4.1.41</ecNumber>
    </recommendedName>
    <alternativeName>
        <fullName>Protein-UDP acetylgalactosaminyltransferase 3</fullName>
    </alternativeName>
    <alternativeName>
        <fullName>UDP-GalNAc:polypeptide N-acetylgalactosaminyltransferase 3</fullName>
    </alternativeName>
</protein>
<feature type="chain" id="PRO_0000059157" description="Polypeptide N-acetylgalactosaminyltransferase 3">
    <location>
        <begin position="1"/>
        <end position="667"/>
    </location>
</feature>
<feature type="topological domain" description="Cytoplasmic" evidence="2">
    <location>
        <begin position="1"/>
        <end position="12"/>
    </location>
</feature>
<feature type="transmembrane region" description="Helical; Signal-anchor for type II membrane protein" evidence="2">
    <location>
        <begin position="13"/>
        <end position="35"/>
    </location>
</feature>
<feature type="topological domain" description="Lumenal" evidence="2">
    <location>
        <begin position="36"/>
        <end position="667"/>
    </location>
</feature>
<feature type="domain" description="Ricin B-type lectin" evidence="3">
    <location>
        <begin position="513"/>
        <end position="661"/>
    </location>
</feature>
<feature type="region of interest" description="Catalytic subdomain A">
    <location>
        <begin position="149"/>
        <end position="259"/>
    </location>
</feature>
<feature type="region of interest" description="Catalytic subdomain B">
    <location>
        <begin position="321"/>
        <end position="383"/>
    </location>
</feature>
<feature type="binding site" evidence="1">
    <location>
        <position position="190"/>
    </location>
    <ligand>
        <name>substrate</name>
    </ligand>
</feature>
<feature type="binding site" evidence="1">
    <location>
        <position position="220"/>
    </location>
    <ligand>
        <name>substrate</name>
    </ligand>
</feature>
<feature type="binding site" evidence="1">
    <location>
        <position position="243"/>
    </location>
    <ligand>
        <name>Mn(2+)</name>
        <dbReference type="ChEBI" id="CHEBI:29035"/>
    </ligand>
</feature>
<feature type="binding site" evidence="1">
    <location>
        <position position="245"/>
    </location>
    <ligand>
        <name>Mn(2+)</name>
        <dbReference type="ChEBI" id="CHEBI:29035"/>
    </ligand>
</feature>
<feature type="binding site" evidence="1">
    <location>
        <position position="352"/>
    </location>
    <ligand>
        <name>substrate</name>
    </ligand>
</feature>
<feature type="binding site" evidence="1">
    <location>
        <position position="380"/>
    </location>
    <ligand>
        <name>Mn(2+)</name>
        <dbReference type="ChEBI" id="CHEBI:29035"/>
    </ligand>
</feature>
<feature type="binding site" evidence="1">
    <location>
        <position position="383"/>
    </location>
    <ligand>
        <name>substrate</name>
    </ligand>
</feature>
<feature type="binding site" evidence="1">
    <location>
        <position position="388"/>
    </location>
    <ligand>
        <name>substrate</name>
    </ligand>
</feature>
<feature type="glycosylation site" description="N-linked (GlcNAc...) asparagine" evidence="2">
    <location>
        <position position="75"/>
    </location>
</feature>
<feature type="glycosylation site" description="N-linked (GlcNAc...) asparagine" evidence="2">
    <location>
        <position position="129"/>
    </location>
</feature>
<feature type="glycosylation site" description="N-linked (GlcNAc...) asparagine" evidence="2">
    <location>
        <position position="279"/>
    </location>
</feature>
<feature type="glycosylation site" description="N-linked (GlcNAc...) asparagine" evidence="2">
    <location>
        <position position="313"/>
    </location>
</feature>
<feature type="glycosylation site" description="N-linked (GlcNAc...) asparagine" evidence="2">
    <location>
        <position position="433"/>
    </location>
</feature>
<feature type="glycosylation site" description="N-linked (GlcNAc...) asparagine" evidence="2">
    <location>
        <position position="590"/>
    </location>
</feature>
<feature type="disulfide bond" evidence="3">
    <location>
        <begin position="140"/>
        <end position="375"/>
    </location>
</feature>
<feature type="disulfide bond" evidence="3">
    <location>
        <begin position="366"/>
        <end position="446"/>
    </location>
</feature>
<feature type="disulfide bond" evidence="3">
    <location>
        <begin position="526"/>
        <end position="547"/>
    </location>
</feature>
<feature type="disulfide bond" evidence="3">
    <location>
        <begin position="572"/>
        <end position="601"/>
    </location>
</feature>
<feature type="disulfide bond" evidence="3">
    <location>
        <begin position="626"/>
        <end position="649"/>
    </location>
</feature>
<feature type="mutagenesis site" description="Does not affect subcellular location. Loss of catalytic activity." evidence="7">
    <original>R</original>
    <variation>C</variation>
    <location>
        <position position="130"/>
    </location>
</feature>